<sequence length="379" mass="42569">MPILSTEIFNEADAGFVYQSNSNDYSDGFEGPEKKLDIRFGPISKGSVKSIAGSPSKVGLRTIDKEKWQTVLDSARCTIISQTSNDHMDSYVLSESSLFVYPRRAMIKTCGTTTLLHLIAKMVQVGKECGLEVEMVVFSRKNLNQPSKQVFPHCSFSDEVNFLNKIFDGQAYVMGDVNKDHWNLYIADFRKNPTLQRTEQTFEVMMHDLDETVMKQFFKREGVSAWDTTVNSGIADLLPGSMIDDFQFDPCGYSMNGLLNEFYWTIHITPESHCSYVSFDTNVALADYNQLLAKVLNVFKPGRFTAALYAEDGAPCGDPYTAFDVNVPSYAIQNKTVHGFDGGYDVVVSNYQQLDKKVNFSNDDLIQSIESTNIDLIQV</sequence>
<organism>
    <name type="scientific">Dictyostelium discoideum</name>
    <name type="common">Social amoeba</name>
    <dbReference type="NCBI Taxonomy" id="44689"/>
    <lineage>
        <taxon>Eukaryota</taxon>
        <taxon>Amoebozoa</taxon>
        <taxon>Evosea</taxon>
        <taxon>Eumycetozoa</taxon>
        <taxon>Dictyostelia</taxon>
        <taxon>Dictyosteliales</taxon>
        <taxon>Dictyosteliaceae</taxon>
        <taxon>Dictyostelium</taxon>
    </lineage>
</organism>
<feature type="chain" id="PRO_0000327446" description="S-adenosylmethionine decarboxylase beta chain">
    <location>
        <begin position="1"/>
        <end position="95"/>
    </location>
</feature>
<feature type="chain" id="PRO_0000327447" description="S-adenosylmethionine decarboxylase alpha chain">
    <location>
        <begin position="96"/>
        <end position="379"/>
    </location>
</feature>
<feature type="active site" evidence="1">
    <location>
        <position position="30"/>
    </location>
</feature>
<feature type="active site" evidence="1">
    <location>
        <position position="33"/>
    </location>
</feature>
<feature type="active site" description="Schiff-base intermediate with substrate; via pyruvic acid" evidence="1">
    <location>
        <position position="96"/>
    </location>
</feature>
<feature type="active site" description="Proton donor; for catalytic activity" evidence="1">
    <location>
        <position position="110"/>
    </location>
</feature>
<feature type="active site" description="Proton acceptor; for processing activity" evidence="1">
    <location>
        <position position="254"/>
    </location>
</feature>
<feature type="active site" description="Proton acceptor; for processing activity" evidence="1">
    <location>
        <position position="267"/>
    </location>
</feature>
<feature type="site" description="Cleavage (non-hydrolytic); by autolysis" evidence="1">
    <location>
        <begin position="95"/>
        <end position="96"/>
    </location>
</feature>
<feature type="modified residue" description="Pyruvic acid (Ser); by autocatalysis" evidence="1">
    <location>
        <position position="96"/>
    </location>
</feature>
<proteinExistence type="inferred from homology"/>
<reference key="1">
    <citation type="journal article" date="2002" name="Nature">
        <title>Sequence and analysis of chromosome 2 of Dictyostelium discoideum.</title>
        <authorList>
            <person name="Gloeckner G."/>
            <person name="Eichinger L."/>
            <person name="Szafranski K."/>
            <person name="Pachebat J.A."/>
            <person name="Bankier A.T."/>
            <person name="Dear P.H."/>
            <person name="Lehmann R."/>
            <person name="Baumgart C."/>
            <person name="Parra G."/>
            <person name="Abril J.F."/>
            <person name="Guigo R."/>
            <person name="Kumpf K."/>
            <person name="Tunggal B."/>
            <person name="Cox E.C."/>
            <person name="Quail M.A."/>
            <person name="Platzer M."/>
            <person name="Rosenthal A."/>
            <person name="Noegel A.A."/>
        </authorList>
    </citation>
    <scope>NUCLEOTIDE SEQUENCE [LARGE SCALE GENOMIC DNA]</scope>
    <source>
        <strain>AX4</strain>
    </source>
</reference>
<reference key="2">
    <citation type="journal article" date="2005" name="Nature">
        <title>The genome of the social amoeba Dictyostelium discoideum.</title>
        <authorList>
            <person name="Eichinger L."/>
            <person name="Pachebat J.A."/>
            <person name="Gloeckner G."/>
            <person name="Rajandream M.A."/>
            <person name="Sucgang R."/>
            <person name="Berriman M."/>
            <person name="Song J."/>
            <person name="Olsen R."/>
            <person name="Szafranski K."/>
            <person name="Xu Q."/>
            <person name="Tunggal B."/>
            <person name="Kummerfeld S."/>
            <person name="Madera M."/>
            <person name="Konfortov B.A."/>
            <person name="Rivero F."/>
            <person name="Bankier A.T."/>
            <person name="Lehmann R."/>
            <person name="Hamlin N."/>
            <person name="Davies R."/>
            <person name="Gaudet P."/>
            <person name="Fey P."/>
            <person name="Pilcher K."/>
            <person name="Chen G."/>
            <person name="Saunders D."/>
            <person name="Sodergren E.J."/>
            <person name="Davis P."/>
            <person name="Kerhornou A."/>
            <person name="Nie X."/>
            <person name="Hall N."/>
            <person name="Anjard C."/>
            <person name="Hemphill L."/>
            <person name="Bason N."/>
            <person name="Farbrother P."/>
            <person name="Desany B."/>
            <person name="Just E."/>
            <person name="Morio T."/>
            <person name="Rost R."/>
            <person name="Churcher C.M."/>
            <person name="Cooper J."/>
            <person name="Haydock S."/>
            <person name="van Driessche N."/>
            <person name="Cronin A."/>
            <person name="Goodhead I."/>
            <person name="Muzny D.M."/>
            <person name="Mourier T."/>
            <person name="Pain A."/>
            <person name="Lu M."/>
            <person name="Harper D."/>
            <person name="Lindsay R."/>
            <person name="Hauser H."/>
            <person name="James K.D."/>
            <person name="Quiles M."/>
            <person name="Madan Babu M."/>
            <person name="Saito T."/>
            <person name="Buchrieser C."/>
            <person name="Wardroper A."/>
            <person name="Felder M."/>
            <person name="Thangavelu M."/>
            <person name="Johnson D."/>
            <person name="Knights A."/>
            <person name="Loulseged H."/>
            <person name="Mungall K.L."/>
            <person name="Oliver K."/>
            <person name="Price C."/>
            <person name="Quail M.A."/>
            <person name="Urushihara H."/>
            <person name="Hernandez J."/>
            <person name="Rabbinowitsch E."/>
            <person name="Steffen D."/>
            <person name="Sanders M."/>
            <person name="Ma J."/>
            <person name="Kohara Y."/>
            <person name="Sharp S."/>
            <person name="Simmonds M.N."/>
            <person name="Spiegler S."/>
            <person name="Tivey A."/>
            <person name="Sugano S."/>
            <person name="White B."/>
            <person name="Walker D."/>
            <person name="Woodward J.R."/>
            <person name="Winckler T."/>
            <person name="Tanaka Y."/>
            <person name="Shaulsky G."/>
            <person name="Schleicher M."/>
            <person name="Weinstock G.M."/>
            <person name="Rosenthal A."/>
            <person name="Cox E.C."/>
            <person name="Chisholm R.L."/>
            <person name="Gibbs R.A."/>
            <person name="Loomis W.F."/>
            <person name="Platzer M."/>
            <person name="Kay R.R."/>
            <person name="Williams J.G."/>
            <person name="Dear P.H."/>
            <person name="Noegel A.A."/>
            <person name="Barrell B.G."/>
            <person name="Kuspa A."/>
        </authorList>
    </citation>
    <scope>NUCLEOTIDE SEQUENCE [LARGE SCALE GENOMIC DNA]</scope>
    <source>
        <strain>AX4</strain>
    </source>
</reference>
<dbReference type="EC" id="4.1.1.50"/>
<dbReference type="EMBL" id="AAFI02000013">
    <property type="protein sequence ID" value="EAL69534.2"/>
    <property type="molecule type" value="Genomic_DNA"/>
</dbReference>
<dbReference type="RefSeq" id="XP_643401.2">
    <property type="nucleotide sequence ID" value="XM_638309.2"/>
</dbReference>
<dbReference type="SMR" id="Q8T1E3"/>
<dbReference type="FunCoup" id="Q8T1E3">
    <property type="interactions" value="385"/>
</dbReference>
<dbReference type="STRING" id="44689.Q8T1E3"/>
<dbReference type="PaxDb" id="44689-DDB0237590"/>
<dbReference type="EnsemblProtists" id="EAL69534">
    <property type="protein sequence ID" value="EAL69534"/>
    <property type="gene ID" value="DDB_G0275567"/>
</dbReference>
<dbReference type="GeneID" id="8619987"/>
<dbReference type="KEGG" id="ddi:DDB_G0275567"/>
<dbReference type="dictyBase" id="DDB_G0275567">
    <property type="gene designation" value="amd1"/>
</dbReference>
<dbReference type="VEuPathDB" id="AmoebaDB:DDB_G0275567"/>
<dbReference type="eggNOG" id="KOG0788">
    <property type="taxonomic scope" value="Eukaryota"/>
</dbReference>
<dbReference type="HOGENOM" id="CLU_023050_1_0_1"/>
<dbReference type="InParanoid" id="Q8T1E3"/>
<dbReference type="OMA" id="WFEESSN"/>
<dbReference type="PhylomeDB" id="Q8T1E3"/>
<dbReference type="Reactome" id="R-DDI-351202">
    <property type="pathway name" value="Metabolism of polyamines"/>
</dbReference>
<dbReference type="UniPathway" id="UPA00331">
    <property type="reaction ID" value="UER00451"/>
</dbReference>
<dbReference type="PRO" id="PR:Q8T1E3"/>
<dbReference type="Proteomes" id="UP000002195">
    <property type="component" value="Chromosome 2"/>
</dbReference>
<dbReference type="GO" id="GO:0005829">
    <property type="term" value="C:cytosol"/>
    <property type="evidence" value="ECO:0000314"/>
    <property type="project" value="dictyBase"/>
</dbReference>
<dbReference type="GO" id="GO:0004014">
    <property type="term" value="F:adenosylmethionine decarboxylase activity"/>
    <property type="evidence" value="ECO:0000250"/>
    <property type="project" value="dictyBase"/>
</dbReference>
<dbReference type="GO" id="GO:0009446">
    <property type="term" value="P:putrescine biosynthetic process"/>
    <property type="evidence" value="ECO:0000315"/>
    <property type="project" value="dictyBase"/>
</dbReference>
<dbReference type="GO" id="GO:0008295">
    <property type="term" value="P:spermidine biosynthetic process"/>
    <property type="evidence" value="ECO:0000315"/>
    <property type="project" value="dictyBase"/>
</dbReference>
<dbReference type="GO" id="GO:0006597">
    <property type="term" value="P:spermine biosynthetic process"/>
    <property type="evidence" value="ECO:0000318"/>
    <property type="project" value="GO_Central"/>
</dbReference>
<dbReference type="FunFam" id="3.30.360.50:FF:000001">
    <property type="entry name" value="S-adenosylmethionine decarboxylase proenzyme"/>
    <property type="match status" value="1"/>
</dbReference>
<dbReference type="FunFam" id="3.60.90.10:FF:000026">
    <property type="entry name" value="S-adenosylmethionine decarboxylase proenzyme"/>
    <property type="match status" value="1"/>
</dbReference>
<dbReference type="Gene3D" id="3.30.360.50">
    <property type="entry name" value="S-adenosylmethionine decarboxylase"/>
    <property type="match status" value="1"/>
</dbReference>
<dbReference type="Gene3D" id="3.60.90.10">
    <property type="entry name" value="S-adenosylmethionine decarboxylase"/>
    <property type="match status" value="1"/>
</dbReference>
<dbReference type="InterPro" id="IPR048283">
    <property type="entry name" value="AdoMetDC-like"/>
</dbReference>
<dbReference type="InterPro" id="IPR001985">
    <property type="entry name" value="S-AdoMet_decarboxylase_euk"/>
</dbReference>
<dbReference type="InterPro" id="IPR016067">
    <property type="entry name" value="S-AdoMet_deCO2ase_core"/>
</dbReference>
<dbReference type="InterPro" id="IPR018166">
    <property type="entry name" value="S-AdoMet_deCO2ase_CS"/>
</dbReference>
<dbReference type="NCBIfam" id="TIGR00535">
    <property type="entry name" value="SAM_DCase"/>
    <property type="match status" value="1"/>
</dbReference>
<dbReference type="PANTHER" id="PTHR11570">
    <property type="entry name" value="S-ADENOSYLMETHIONINE DECARBOXYLASE"/>
    <property type="match status" value="1"/>
</dbReference>
<dbReference type="PANTHER" id="PTHR11570:SF0">
    <property type="entry name" value="S-ADENOSYLMETHIONINE DECARBOXYLASE PROENZYME"/>
    <property type="match status" value="1"/>
</dbReference>
<dbReference type="Pfam" id="PF01536">
    <property type="entry name" value="SAM_decarbox"/>
    <property type="match status" value="1"/>
</dbReference>
<dbReference type="PIRSF" id="PIRSF001355">
    <property type="entry name" value="S-AdenosylMet_decarboxylase"/>
    <property type="match status" value="1"/>
</dbReference>
<dbReference type="SUPFAM" id="SSF56276">
    <property type="entry name" value="S-adenosylmethionine decarboxylase"/>
    <property type="match status" value="1"/>
</dbReference>
<dbReference type="PROSITE" id="PS01336">
    <property type="entry name" value="ADOMETDC"/>
    <property type="match status" value="1"/>
</dbReference>
<gene>
    <name type="primary">amd1</name>
    <name type="ORF">DDB_G0275567</name>
</gene>
<comment type="function">
    <text evidence="1">S-adenosylmethionine decarboxylase is essential for the biosynthesis of spermine and spermidine. The alpha subunit contains the active site (By similarity).</text>
</comment>
<comment type="catalytic activity">
    <reaction>
        <text>S-adenosyl-L-methionine + H(+) = S-adenosyl 3-(methylsulfanyl)propylamine + CO2</text>
        <dbReference type="Rhea" id="RHEA:15981"/>
        <dbReference type="ChEBI" id="CHEBI:15378"/>
        <dbReference type="ChEBI" id="CHEBI:16526"/>
        <dbReference type="ChEBI" id="CHEBI:57443"/>
        <dbReference type="ChEBI" id="CHEBI:59789"/>
        <dbReference type="EC" id="4.1.1.50"/>
    </reaction>
</comment>
<comment type="cofactor">
    <cofactor evidence="1">
        <name>pyruvate</name>
        <dbReference type="ChEBI" id="CHEBI:15361"/>
    </cofactor>
    <text evidence="1">Binds 1 pyruvoyl group covalently per subunit.</text>
</comment>
<comment type="pathway">
    <text>Amine and polyamine biosynthesis; S-adenosylmethioninamine biosynthesis; S-adenosylmethioninamine from S-adenosyl-L-methionine: step 1/1.</text>
</comment>
<comment type="subunit">
    <text evidence="1">Heterotetramer of two alpha and two beta chains.</text>
</comment>
<comment type="PTM">
    <text evidence="1">Is synthesized initially as an inactive proenzyme. Formation of the active enzyme involves a self-maturation process in which the active site pyruvoyl group is generated from an internal serine residue via an autocatalytic post-translational modification. Two non-identical subunits are generated from the proenzyme in this reaction, and the pyruvate is formed at the N-terminus of the alpha chain, which is derived from the carboxyl end of the proenzyme. The post-translation cleavage follows an unusual pathway, termed non-hydrolytic serinolysis, in which the side chain hydroxyl group of the serine supplies its oxygen atom to form the C-terminus of the beta chain, while the remainder of the serine residue undergoes an oxidative deamination to produce ammonia and the pyruvoyl group blocking the N-terminus of the alpha chain (By similarity).</text>
</comment>
<comment type="similarity">
    <text evidence="2">Belongs to the eukaryotic AdoMetDC family.</text>
</comment>
<protein>
    <recommendedName>
        <fullName>S-adenosylmethionine decarboxylase proenzyme</fullName>
        <shortName>AdoMetDC</shortName>
        <shortName>SAMDC</shortName>
        <ecNumber>4.1.1.50</ecNumber>
    </recommendedName>
    <component>
        <recommendedName>
            <fullName>S-adenosylmethionine decarboxylase alpha chain</fullName>
        </recommendedName>
    </component>
    <component>
        <recommendedName>
            <fullName>S-adenosylmethionine decarboxylase beta chain</fullName>
        </recommendedName>
    </component>
</protein>
<accession>Q8T1E3</accession>
<accession>B0M0Q1</accession>
<accession>Q553L2</accession>
<evidence type="ECO:0000250" key="1"/>
<evidence type="ECO:0000305" key="2"/>
<keyword id="KW-0068">Autocatalytic cleavage</keyword>
<keyword id="KW-0210">Decarboxylase</keyword>
<keyword id="KW-0456">Lyase</keyword>
<keyword id="KW-0620">Polyamine biosynthesis</keyword>
<keyword id="KW-0670">Pyruvate</keyword>
<keyword id="KW-1185">Reference proteome</keyword>
<keyword id="KW-0949">S-adenosyl-L-methionine</keyword>
<keyword id="KW-0704">Schiff base</keyword>
<keyword id="KW-0745">Spermidine biosynthesis</keyword>
<keyword id="KW-0865">Zymogen</keyword>
<name>DCAM_DICDI</name>